<accession>P63450</accession>
<accession>Q8YGP7</accession>
<sequence>MSSTFDKVADIIAETSEIDRDTITPESHTIDDLGIDSLDFLDIVFAIDKAFGIKIPLEQWTQEVNEGKVPTEEYFVLKNLCAKIDELVAAKKG</sequence>
<protein>
    <recommendedName>
        <fullName>Acyl carrier protein AcpXL</fullName>
    </recommendedName>
</protein>
<name>ACPXL_BRUME</name>
<keyword id="KW-0963">Cytoplasm</keyword>
<keyword id="KW-0275">Fatty acid biosynthesis</keyword>
<keyword id="KW-0276">Fatty acid metabolism</keyword>
<keyword id="KW-0441">Lipid A biosynthesis</keyword>
<keyword id="KW-0444">Lipid biosynthesis</keyword>
<keyword id="KW-0443">Lipid metabolism</keyword>
<keyword id="KW-0596">Phosphopantetheine</keyword>
<keyword id="KW-0597">Phosphoprotein</keyword>
<organism>
    <name type="scientific">Brucella melitensis biotype 1 (strain ATCC 23456 / CCUG 17765 / NCTC 10094 / 16M)</name>
    <dbReference type="NCBI Taxonomy" id="224914"/>
    <lineage>
        <taxon>Bacteria</taxon>
        <taxon>Pseudomonadati</taxon>
        <taxon>Pseudomonadota</taxon>
        <taxon>Alphaproteobacteria</taxon>
        <taxon>Hyphomicrobiales</taxon>
        <taxon>Brucellaceae</taxon>
        <taxon>Brucella/Ochrobactrum group</taxon>
        <taxon>Brucella</taxon>
    </lineage>
</organism>
<dbReference type="EMBL" id="AE008917">
    <property type="protein sequence ID" value="AAL52292.1"/>
    <property type="molecule type" value="Genomic_DNA"/>
</dbReference>
<dbReference type="PIR" id="AI3390">
    <property type="entry name" value="AI3390"/>
</dbReference>
<dbReference type="RefSeq" id="WP_002963985.1">
    <property type="nucleotide sequence ID" value="NZ_GG703778.1"/>
</dbReference>
<dbReference type="SMR" id="P63450"/>
<dbReference type="KEGG" id="bme:BMEI1111"/>
<dbReference type="KEGG" id="bmel:DK63_303"/>
<dbReference type="PATRIC" id="fig|224914.52.peg.312"/>
<dbReference type="eggNOG" id="COG0236">
    <property type="taxonomic scope" value="Bacteria"/>
</dbReference>
<dbReference type="UniPathway" id="UPA00360"/>
<dbReference type="Proteomes" id="UP000000419">
    <property type="component" value="Chromosome I"/>
</dbReference>
<dbReference type="GO" id="GO:0005829">
    <property type="term" value="C:cytosol"/>
    <property type="evidence" value="ECO:0007669"/>
    <property type="project" value="TreeGrafter"/>
</dbReference>
<dbReference type="GO" id="GO:0016020">
    <property type="term" value="C:membrane"/>
    <property type="evidence" value="ECO:0007669"/>
    <property type="project" value="GOC"/>
</dbReference>
<dbReference type="GO" id="GO:0000035">
    <property type="term" value="F:acyl binding"/>
    <property type="evidence" value="ECO:0007669"/>
    <property type="project" value="TreeGrafter"/>
</dbReference>
<dbReference type="GO" id="GO:0000036">
    <property type="term" value="F:acyl carrier activity"/>
    <property type="evidence" value="ECO:0007669"/>
    <property type="project" value="TreeGrafter"/>
</dbReference>
<dbReference type="GO" id="GO:0036104">
    <property type="term" value="P:Kdo2-lipid A biosynthetic process"/>
    <property type="evidence" value="ECO:0007669"/>
    <property type="project" value="UniProtKB-UniPathway"/>
</dbReference>
<dbReference type="GO" id="GO:0009245">
    <property type="term" value="P:lipid A biosynthetic process"/>
    <property type="evidence" value="ECO:0007669"/>
    <property type="project" value="UniProtKB-KW"/>
</dbReference>
<dbReference type="Gene3D" id="1.10.1200.10">
    <property type="entry name" value="ACP-like"/>
    <property type="match status" value="1"/>
</dbReference>
<dbReference type="InterPro" id="IPR003231">
    <property type="entry name" value="ACP"/>
</dbReference>
<dbReference type="InterPro" id="IPR036736">
    <property type="entry name" value="ACP-like_sf"/>
</dbReference>
<dbReference type="InterPro" id="IPR009081">
    <property type="entry name" value="PP-bd_ACP"/>
</dbReference>
<dbReference type="InterPro" id="IPR006162">
    <property type="entry name" value="Ppantetheine_attach_site"/>
</dbReference>
<dbReference type="NCBIfam" id="NF005079">
    <property type="entry name" value="PRK06508.1"/>
    <property type="match status" value="1"/>
</dbReference>
<dbReference type="PANTHER" id="PTHR20863">
    <property type="entry name" value="ACYL CARRIER PROTEIN"/>
    <property type="match status" value="1"/>
</dbReference>
<dbReference type="PANTHER" id="PTHR20863:SF76">
    <property type="entry name" value="CARRIER DOMAIN-CONTAINING PROTEIN"/>
    <property type="match status" value="1"/>
</dbReference>
<dbReference type="Pfam" id="PF00550">
    <property type="entry name" value="PP-binding"/>
    <property type="match status" value="1"/>
</dbReference>
<dbReference type="SUPFAM" id="SSF47336">
    <property type="entry name" value="ACP-like"/>
    <property type="match status" value="1"/>
</dbReference>
<dbReference type="PROSITE" id="PS50075">
    <property type="entry name" value="CARRIER"/>
    <property type="match status" value="1"/>
</dbReference>
<dbReference type="PROSITE" id="PS00012">
    <property type="entry name" value="PHOSPHOPANTETHEINE"/>
    <property type="match status" value="1"/>
</dbReference>
<proteinExistence type="inferred from homology"/>
<feature type="chain" id="PRO_0000180237" description="Acyl carrier protein AcpXL">
    <location>
        <begin position="1"/>
        <end position="93"/>
    </location>
</feature>
<feature type="domain" description="Carrier" evidence="2">
    <location>
        <begin position="2"/>
        <end position="88"/>
    </location>
</feature>
<feature type="modified residue" description="O-(pantetheine 4'-phosphoryl)serine" evidence="2">
    <location>
        <position position="37"/>
    </location>
</feature>
<comment type="function">
    <text evidence="1">Carrier of the growing fatty acid chain in fatty acid biosynthesis. Is involved in the transfer of long hydroxylated fatty acids to lipid A (By similarity).</text>
</comment>
<comment type="pathway">
    <text>Glycolipid biosynthesis; KDO(2)-lipid A biosynthesis.</text>
</comment>
<comment type="subcellular location">
    <subcellularLocation>
        <location evidence="1">Cytoplasm</location>
    </subcellularLocation>
</comment>
<comment type="PTM">
    <text evidence="1">4'-phosphopantetheine is transferred from CoA to a specific serine of apo-ACP by AcpS. This modification is essential for activity because fatty acids are bound in thioester linkage to the sulfhydryl of the prosthetic group (By similarity).</text>
</comment>
<gene>
    <name type="primary">acpXL</name>
    <name type="ordered locus">BMEI1111</name>
</gene>
<reference key="1">
    <citation type="journal article" date="2002" name="Proc. Natl. Acad. Sci. U.S.A.">
        <title>The genome sequence of the facultative intracellular pathogen Brucella melitensis.</title>
        <authorList>
            <person name="DelVecchio V.G."/>
            <person name="Kapatral V."/>
            <person name="Redkar R.J."/>
            <person name="Patra G."/>
            <person name="Mujer C."/>
            <person name="Los T."/>
            <person name="Ivanova N."/>
            <person name="Anderson I."/>
            <person name="Bhattacharyya A."/>
            <person name="Lykidis A."/>
            <person name="Reznik G."/>
            <person name="Jablonski L."/>
            <person name="Larsen N."/>
            <person name="D'Souza M."/>
            <person name="Bernal A."/>
            <person name="Mazur M."/>
            <person name="Goltsman E."/>
            <person name="Selkov E."/>
            <person name="Elzer P.H."/>
            <person name="Hagius S."/>
            <person name="O'Callaghan D."/>
            <person name="Letesson J.-J."/>
            <person name="Haselkorn R."/>
            <person name="Kyrpides N.C."/>
            <person name="Overbeek R."/>
        </authorList>
    </citation>
    <scope>NUCLEOTIDE SEQUENCE [LARGE SCALE GENOMIC DNA]</scope>
    <source>
        <strain>ATCC 23456 / CCUG 17765 / NCTC 10094 / 16M</strain>
    </source>
</reference>
<evidence type="ECO:0000250" key="1"/>
<evidence type="ECO:0000255" key="2">
    <source>
        <dbReference type="PROSITE-ProRule" id="PRU00258"/>
    </source>
</evidence>